<accession>Q7Z6M4</accession>
<accession>A8K6K0</accession>
<accession>Q9P0E0</accession>
<sequence length="381" mass="43958">MAAFGRQVLDWHRLIPLTWACMARQTPHLGEQRRTTASLLRKLTTASNGGVIEELSCVRSNNYVQEPECRRNLVQCLLEKQGTPVVQGSLELERVMSSLLDMGFSNAHINELLSVRRGASLQQLLDIISEFILLGLNPEPVCVVLKKSPQLLKLPIMQMRKRSSYLQKLGLGEGKLKRVLYCCPEIFTMRQQDINDTVRLLKEKCLFTVQQVTKILHSCPSVLREDLGQLEYKFQYAYFRMGIKHPDIVKSEYLQYSLTKIKQRHIYLERLGRYQTPDKKGQTQIPNPLLKDILRVSEAEFLARTACTSVEEFQVFKKLLAREEEESESSTSDDKRASLDEDEDDDDEEDNDEDDNDEDDDDEDDDEAEDNDEDEDDDEEE</sequence>
<evidence type="ECO:0000256" key="1">
    <source>
        <dbReference type="SAM" id="MobiDB-lite"/>
    </source>
</evidence>
<evidence type="ECO:0000269" key="2">
    <source>
    </source>
</evidence>
<evidence type="ECO:0000269" key="3">
    <source>
    </source>
</evidence>
<evidence type="ECO:0000269" key="4">
    <source>
    </source>
</evidence>
<evidence type="ECO:0000305" key="5"/>
<evidence type="ECO:0007829" key="6">
    <source>
        <dbReference type="PDB" id="4FP9"/>
    </source>
</evidence>
<evidence type="ECO:0007829" key="7">
    <source>
        <dbReference type="PDB" id="4FZV"/>
    </source>
</evidence>
<evidence type="ECO:0007829" key="8">
    <source>
        <dbReference type="PDB" id="7OF0"/>
    </source>
</evidence>
<organism>
    <name type="scientific">Homo sapiens</name>
    <name type="common">Human</name>
    <dbReference type="NCBI Taxonomy" id="9606"/>
    <lineage>
        <taxon>Eukaryota</taxon>
        <taxon>Metazoa</taxon>
        <taxon>Chordata</taxon>
        <taxon>Craniata</taxon>
        <taxon>Vertebrata</taxon>
        <taxon>Euteleostomi</taxon>
        <taxon>Mammalia</taxon>
        <taxon>Eutheria</taxon>
        <taxon>Euarchontoglires</taxon>
        <taxon>Primates</taxon>
        <taxon>Haplorrhini</taxon>
        <taxon>Catarrhini</taxon>
        <taxon>Hominidae</taxon>
        <taxon>Homo</taxon>
    </lineage>
</organism>
<feature type="transit peptide" description="Mitochondrion" evidence="2">
    <location>
        <begin position="1"/>
        <end position="42"/>
    </location>
</feature>
<feature type="chain" id="PRO_0000255461" description="Transcription termination factor 4, mitochondrial">
    <location>
        <begin position="43"/>
        <end position="381"/>
    </location>
</feature>
<feature type="chain" id="PRO_0000424341" description="mTERF domain-containing protein 2 processed">
    <location>
        <begin position="48"/>
        <end position="381"/>
    </location>
</feature>
<feature type="repeat" description="MTERF 1" evidence="4">
    <location>
        <begin position="142"/>
        <end position="172"/>
    </location>
</feature>
<feature type="repeat" description="MTERF 2" evidence="4">
    <location>
        <begin position="177"/>
        <end position="204"/>
    </location>
</feature>
<feature type="repeat" description="MTERF 3" evidence="4">
    <location>
        <begin position="209"/>
        <end position="239"/>
    </location>
</feature>
<feature type="repeat" description="MTERF 4" evidence="4">
    <location>
        <begin position="245"/>
        <end position="270"/>
    </location>
</feature>
<feature type="repeat" description="MTERF 5" evidence="4">
    <location>
        <begin position="290"/>
        <end position="318"/>
    </location>
</feature>
<feature type="region of interest" description="Dimerization with NSUN4">
    <location>
        <begin position="310"/>
        <end position="327"/>
    </location>
</feature>
<feature type="region of interest" description="Disordered" evidence="1">
    <location>
        <begin position="322"/>
        <end position="381"/>
    </location>
</feature>
<feature type="compositionally biased region" description="Acidic residues" evidence="1">
    <location>
        <begin position="340"/>
        <end position="381"/>
    </location>
</feature>
<feature type="sequence variant" id="VAR_028865" description="In dbSNP:rs3796093.">
    <original>T</original>
    <variation>A</variation>
    <location>
        <position position="45"/>
    </location>
</feature>
<feature type="sequence variant" id="VAR_028866" description="In dbSNP:rs2286323.">
    <original>M</original>
    <variation>T</variation>
    <location>
        <position position="189"/>
    </location>
</feature>
<feature type="sequence variant" id="VAR_028867" description="In dbSNP:rs2240539.">
    <original>L</original>
    <variation>V</variation>
    <location>
        <position position="339"/>
    </location>
</feature>
<feature type="sequence variant" id="VAR_028868" description="In dbSNP:rs10203977.">
    <original>D</original>
    <variation>E</variation>
    <location>
        <position position="347"/>
    </location>
</feature>
<feature type="sequence variant" id="VAR_028869" description="In dbSNP:rs10167328.">
    <original>D</original>
    <variation>E</variation>
    <location>
        <position position="378"/>
    </location>
</feature>
<feature type="sequence conflict" description="In Ref. 4; AAF28919." evidence="5" ref="4">
    <original>P</original>
    <variation>R</variation>
    <location>
        <position position="27"/>
    </location>
</feature>
<feature type="sequence conflict" description="In Ref. 1; BAF84354." evidence="5" ref="1">
    <original>S</original>
    <variation>G</variation>
    <location>
        <position position="251"/>
    </location>
</feature>
<feature type="sequence conflict" description="In Ref. 3; AAH53533." evidence="5" ref="3">
    <original>C</original>
    <variation>R</variation>
    <location>
        <position position="307"/>
    </location>
</feature>
<feature type="sequence conflict" description="In Ref. 1; BAF84354." evidence="5" ref="1">
    <original>E</original>
    <variation>G</variation>
    <location>
        <position position="312"/>
    </location>
</feature>
<feature type="helix" evidence="8">
    <location>
        <begin position="92"/>
        <end position="100"/>
    </location>
</feature>
<feature type="turn" evidence="8">
    <location>
        <begin position="101"/>
        <end position="103"/>
    </location>
</feature>
<feature type="helix" evidence="8">
    <location>
        <begin position="106"/>
        <end position="115"/>
    </location>
</feature>
<feature type="turn" evidence="7">
    <location>
        <begin position="123"/>
        <end position="125"/>
    </location>
</feature>
<feature type="helix" evidence="7">
    <location>
        <begin position="126"/>
        <end position="134"/>
    </location>
</feature>
<feature type="helix" evidence="7">
    <location>
        <begin position="140"/>
        <end position="146"/>
    </location>
</feature>
<feature type="helix" evidence="7">
    <location>
        <begin position="149"/>
        <end position="152"/>
    </location>
</feature>
<feature type="helix" evidence="7">
    <location>
        <begin position="156"/>
        <end position="169"/>
    </location>
</feature>
<feature type="turn" evidence="6">
    <location>
        <begin position="172"/>
        <end position="175"/>
    </location>
</feature>
<feature type="helix" evidence="7">
    <location>
        <begin position="177"/>
        <end position="182"/>
    </location>
</feature>
<feature type="helix" evidence="7">
    <location>
        <begin position="184"/>
        <end position="187"/>
    </location>
</feature>
<feature type="helix" evidence="7">
    <location>
        <begin position="191"/>
        <end position="204"/>
    </location>
</feature>
<feature type="helix" evidence="7">
    <location>
        <begin position="209"/>
        <end position="218"/>
    </location>
</feature>
<feature type="helix" evidence="7">
    <location>
        <begin position="220"/>
        <end position="223"/>
    </location>
</feature>
<feature type="helix" evidence="7">
    <location>
        <begin position="229"/>
        <end position="239"/>
    </location>
</feature>
<feature type="helix" evidence="7">
    <location>
        <begin position="245"/>
        <end position="250"/>
    </location>
</feature>
<feature type="helix" evidence="7">
    <location>
        <begin position="253"/>
        <end position="255"/>
    </location>
</feature>
<feature type="helix" evidence="7">
    <location>
        <begin position="258"/>
        <end position="270"/>
    </location>
</feature>
<feature type="strand" evidence="7">
    <location>
        <begin position="279"/>
        <end position="281"/>
    </location>
</feature>
<feature type="helix" evidence="7">
    <location>
        <begin position="290"/>
        <end position="294"/>
    </location>
</feature>
<feature type="helix" evidence="7">
    <location>
        <begin position="298"/>
        <end position="304"/>
    </location>
</feature>
<feature type="helix" evidence="7">
    <location>
        <begin position="310"/>
        <end position="327"/>
    </location>
</feature>
<keyword id="KW-0002">3D-structure</keyword>
<keyword id="KW-0903">Direct protein sequencing</keyword>
<keyword id="KW-0496">Mitochondrion</keyword>
<keyword id="KW-1267">Proteomics identification</keyword>
<keyword id="KW-1185">Reference proteome</keyword>
<keyword id="KW-0677">Repeat</keyword>
<keyword id="KW-0694">RNA-binding</keyword>
<keyword id="KW-0698">rRNA processing</keyword>
<keyword id="KW-0809">Transit peptide</keyword>
<reference key="1">
    <citation type="journal article" date="2004" name="Nat. Genet.">
        <title>Complete sequencing and characterization of 21,243 full-length human cDNAs.</title>
        <authorList>
            <person name="Ota T."/>
            <person name="Suzuki Y."/>
            <person name="Nishikawa T."/>
            <person name="Otsuki T."/>
            <person name="Sugiyama T."/>
            <person name="Irie R."/>
            <person name="Wakamatsu A."/>
            <person name="Hayashi K."/>
            <person name="Sato H."/>
            <person name="Nagai K."/>
            <person name="Kimura K."/>
            <person name="Makita H."/>
            <person name="Sekine M."/>
            <person name="Obayashi M."/>
            <person name="Nishi T."/>
            <person name="Shibahara T."/>
            <person name="Tanaka T."/>
            <person name="Ishii S."/>
            <person name="Yamamoto J."/>
            <person name="Saito K."/>
            <person name="Kawai Y."/>
            <person name="Isono Y."/>
            <person name="Nakamura Y."/>
            <person name="Nagahari K."/>
            <person name="Murakami K."/>
            <person name="Yasuda T."/>
            <person name="Iwayanagi T."/>
            <person name="Wagatsuma M."/>
            <person name="Shiratori A."/>
            <person name="Sudo H."/>
            <person name="Hosoiri T."/>
            <person name="Kaku Y."/>
            <person name="Kodaira H."/>
            <person name="Kondo H."/>
            <person name="Sugawara M."/>
            <person name="Takahashi M."/>
            <person name="Kanda K."/>
            <person name="Yokoi T."/>
            <person name="Furuya T."/>
            <person name="Kikkawa E."/>
            <person name="Omura Y."/>
            <person name="Abe K."/>
            <person name="Kamihara K."/>
            <person name="Katsuta N."/>
            <person name="Sato K."/>
            <person name="Tanikawa M."/>
            <person name="Yamazaki M."/>
            <person name="Ninomiya K."/>
            <person name="Ishibashi T."/>
            <person name="Yamashita H."/>
            <person name="Murakawa K."/>
            <person name="Fujimori K."/>
            <person name="Tanai H."/>
            <person name="Kimata M."/>
            <person name="Watanabe M."/>
            <person name="Hiraoka S."/>
            <person name="Chiba Y."/>
            <person name="Ishida S."/>
            <person name="Ono Y."/>
            <person name="Takiguchi S."/>
            <person name="Watanabe S."/>
            <person name="Yosida M."/>
            <person name="Hotuta T."/>
            <person name="Kusano J."/>
            <person name="Kanehori K."/>
            <person name="Takahashi-Fujii A."/>
            <person name="Hara H."/>
            <person name="Tanase T.-O."/>
            <person name="Nomura Y."/>
            <person name="Togiya S."/>
            <person name="Komai F."/>
            <person name="Hara R."/>
            <person name="Takeuchi K."/>
            <person name="Arita M."/>
            <person name="Imose N."/>
            <person name="Musashino K."/>
            <person name="Yuuki H."/>
            <person name="Oshima A."/>
            <person name="Sasaki N."/>
            <person name="Aotsuka S."/>
            <person name="Yoshikawa Y."/>
            <person name="Matsunawa H."/>
            <person name="Ichihara T."/>
            <person name="Shiohata N."/>
            <person name="Sano S."/>
            <person name="Moriya S."/>
            <person name="Momiyama H."/>
            <person name="Satoh N."/>
            <person name="Takami S."/>
            <person name="Terashima Y."/>
            <person name="Suzuki O."/>
            <person name="Nakagawa S."/>
            <person name="Senoh A."/>
            <person name="Mizoguchi H."/>
            <person name="Goto Y."/>
            <person name="Shimizu F."/>
            <person name="Wakebe H."/>
            <person name="Hishigaki H."/>
            <person name="Watanabe T."/>
            <person name="Sugiyama A."/>
            <person name="Takemoto M."/>
            <person name="Kawakami B."/>
            <person name="Yamazaki M."/>
            <person name="Watanabe K."/>
            <person name="Kumagai A."/>
            <person name="Itakura S."/>
            <person name="Fukuzumi Y."/>
            <person name="Fujimori Y."/>
            <person name="Komiyama M."/>
            <person name="Tashiro H."/>
            <person name="Tanigami A."/>
            <person name="Fujiwara T."/>
            <person name="Ono T."/>
            <person name="Yamada K."/>
            <person name="Fujii Y."/>
            <person name="Ozaki K."/>
            <person name="Hirao M."/>
            <person name="Ohmori Y."/>
            <person name="Kawabata A."/>
            <person name="Hikiji T."/>
            <person name="Kobatake N."/>
            <person name="Inagaki H."/>
            <person name="Ikema Y."/>
            <person name="Okamoto S."/>
            <person name="Okitani R."/>
            <person name="Kawakami T."/>
            <person name="Noguchi S."/>
            <person name="Itoh T."/>
            <person name="Shigeta K."/>
            <person name="Senba T."/>
            <person name="Matsumura K."/>
            <person name="Nakajima Y."/>
            <person name="Mizuno T."/>
            <person name="Morinaga M."/>
            <person name="Sasaki M."/>
            <person name="Togashi T."/>
            <person name="Oyama M."/>
            <person name="Hata H."/>
            <person name="Watanabe M."/>
            <person name="Komatsu T."/>
            <person name="Mizushima-Sugano J."/>
            <person name="Satoh T."/>
            <person name="Shirai Y."/>
            <person name="Takahashi Y."/>
            <person name="Nakagawa K."/>
            <person name="Okumura K."/>
            <person name="Nagase T."/>
            <person name="Nomura N."/>
            <person name="Kikuchi H."/>
            <person name="Masuho Y."/>
            <person name="Yamashita R."/>
            <person name="Nakai K."/>
            <person name="Yada T."/>
            <person name="Nakamura Y."/>
            <person name="Ohara O."/>
            <person name="Isogai T."/>
            <person name="Sugano S."/>
        </authorList>
    </citation>
    <scope>NUCLEOTIDE SEQUENCE [LARGE SCALE MRNA]</scope>
    <source>
        <tissue>Placenta</tissue>
    </source>
</reference>
<reference key="2">
    <citation type="journal article" date="2005" name="Nature">
        <title>Generation and annotation of the DNA sequences of human chromosomes 2 and 4.</title>
        <authorList>
            <person name="Hillier L.W."/>
            <person name="Graves T.A."/>
            <person name="Fulton R.S."/>
            <person name="Fulton L.A."/>
            <person name="Pepin K.H."/>
            <person name="Minx P."/>
            <person name="Wagner-McPherson C."/>
            <person name="Layman D."/>
            <person name="Wylie K."/>
            <person name="Sekhon M."/>
            <person name="Becker M.C."/>
            <person name="Fewell G.A."/>
            <person name="Delehaunty K.D."/>
            <person name="Miner T.L."/>
            <person name="Nash W.E."/>
            <person name="Kremitzki C."/>
            <person name="Oddy L."/>
            <person name="Du H."/>
            <person name="Sun H."/>
            <person name="Bradshaw-Cordum H."/>
            <person name="Ali J."/>
            <person name="Carter J."/>
            <person name="Cordes M."/>
            <person name="Harris A."/>
            <person name="Isak A."/>
            <person name="van Brunt A."/>
            <person name="Nguyen C."/>
            <person name="Du F."/>
            <person name="Courtney L."/>
            <person name="Kalicki J."/>
            <person name="Ozersky P."/>
            <person name="Abbott S."/>
            <person name="Armstrong J."/>
            <person name="Belter E.A."/>
            <person name="Caruso L."/>
            <person name="Cedroni M."/>
            <person name="Cotton M."/>
            <person name="Davidson T."/>
            <person name="Desai A."/>
            <person name="Elliott G."/>
            <person name="Erb T."/>
            <person name="Fronick C."/>
            <person name="Gaige T."/>
            <person name="Haakenson W."/>
            <person name="Haglund K."/>
            <person name="Holmes A."/>
            <person name="Harkins R."/>
            <person name="Kim K."/>
            <person name="Kruchowski S.S."/>
            <person name="Strong C.M."/>
            <person name="Grewal N."/>
            <person name="Goyea E."/>
            <person name="Hou S."/>
            <person name="Levy A."/>
            <person name="Martinka S."/>
            <person name="Mead K."/>
            <person name="McLellan M.D."/>
            <person name="Meyer R."/>
            <person name="Randall-Maher J."/>
            <person name="Tomlinson C."/>
            <person name="Dauphin-Kohlberg S."/>
            <person name="Kozlowicz-Reilly A."/>
            <person name="Shah N."/>
            <person name="Swearengen-Shahid S."/>
            <person name="Snider J."/>
            <person name="Strong J.T."/>
            <person name="Thompson J."/>
            <person name="Yoakum M."/>
            <person name="Leonard S."/>
            <person name="Pearman C."/>
            <person name="Trani L."/>
            <person name="Radionenko M."/>
            <person name="Waligorski J.E."/>
            <person name="Wang C."/>
            <person name="Rock S.M."/>
            <person name="Tin-Wollam A.-M."/>
            <person name="Maupin R."/>
            <person name="Latreille P."/>
            <person name="Wendl M.C."/>
            <person name="Yang S.-P."/>
            <person name="Pohl C."/>
            <person name="Wallis J.W."/>
            <person name="Spieth J."/>
            <person name="Bieri T.A."/>
            <person name="Berkowicz N."/>
            <person name="Nelson J.O."/>
            <person name="Osborne J."/>
            <person name="Ding L."/>
            <person name="Meyer R."/>
            <person name="Sabo A."/>
            <person name="Shotland Y."/>
            <person name="Sinha P."/>
            <person name="Wohldmann P.E."/>
            <person name="Cook L.L."/>
            <person name="Hickenbotham M.T."/>
            <person name="Eldred J."/>
            <person name="Williams D."/>
            <person name="Jones T.A."/>
            <person name="She X."/>
            <person name="Ciccarelli F.D."/>
            <person name="Izaurralde E."/>
            <person name="Taylor J."/>
            <person name="Schmutz J."/>
            <person name="Myers R.M."/>
            <person name="Cox D.R."/>
            <person name="Huang X."/>
            <person name="McPherson J.D."/>
            <person name="Mardis E.R."/>
            <person name="Clifton S.W."/>
            <person name="Warren W.C."/>
            <person name="Chinwalla A.T."/>
            <person name="Eddy S.R."/>
            <person name="Marra M.A."/>
            <person name="Ovcharenko I."/>
            <person name="Furey T.S."/>
            <person name="Miller W."/>
            <person name="Eichler E.E."/>
            <person name="Bork P."/>
            <person name="Suyama M."/>
            <person name="Torrents D."/>
            <person name="Waterston R.H."/>
            <person name="Wilson R.K."/>
        </authorList>
    </citation>
    <scope>NUCLEOTIDE SEQUENCE [LARGE SCALE GENOMIC DNA]</scope>
</reference>
<reference key="3">
    <citation type="journal article" date="2004" name="Genome Res.">
        <title>The status, quality, and expansion of the NIH full-length cDNA project: the Mammalian Gene Collection (MGC).</title>
        <authorList>
            <consortium name="The MGC Project Team"/>
        </authorList>
    </citation>
    <scope>NUCLEOTIDE SEQUENCE [LARGE SCALE MRNA]</scope>
    <source>
        <tissue>Duodenum</tissue>
    </source>
</reference>
<reference key="4">
    <citation type="submission" date="1999-05" db="EMBL/GenBank/DDBJ databases">
        <authorList>
            <person name="Zhang Q.-H."/>
            <person name="Ye M."/>
            <person name="Zhou J."/>
            <person name="Shen Y."/>
            <person name="Wu X.Y."/>
            <person name="Guan Z.Q."/>
            <person name="Wang L."/>
            <person name="Fan H.Y."/>
            <person name="Mao Y.F."/>
            <person name="Dai M."/>
            <person name="Huang Q.-H."/>
            <person name="Chen S.-J."/>
            <person name="Chen Z."/>
        </authorList>
    </citation>
    <scope>NUCLEOTIDE SEQUENCE [LARGE SCALE MRNA] OF 1-157</scope>
    <source>
        <tissue>Umbilical cord blood</tissue>
    </source>
</reference>
<reference key="5">
    <citation type="journal article" date="2011" name="Cell Metab.">
        <title>MTERF4 regulates translation by targeting the methyltransferase NSUN4 to the mammalian mitochondrial ribosome.</title>
        <authorList>
            <person name="Camara Y."/>
            <person name="Asin-Cayuela J."/>
            <person name="Park C.B."/>
            <person name="Metodiev M.D."/>
            <person name="Shi Y."/>
            <person name="Ruzzenente B."/>
            <person name="Kukat C."/>
            <person name="Habermann B."/>
            <person name="Wibom R."/>
            <person name="Hultenby K."/>
            <person name="Franz T."/>
            <person name="Erdjument-Bromage H."/>
            <person name="Tempst P."/>
            <person name="Hallberg B.M."/>
            <person name="Gustafsson C.M."/>
            <person name="Larsson N.G."/>
        </authorList>
    </citation>
    <scope>PARTIAL PROTEIN SEQUENCE</scope>
    <scope>TRANSIT PEPTIDE CLEAVAGE SITE</scope>
    <scope>PROCESSING</scope>
    <scope>FUNCTION</scope>
    <scope>RNA-BINDING</scope>
    <scope>INTERACTION WITH NSUN4</scope>
    <scope>SUBCELLULAR LOCATION</scope>
</reference>
<reference key="6">
    <citation type="journal article" date="2011" name="BMC Syst. Biol.">
        <title>Initial characterization of the human central proteome.</title>
        <authorList>
            <person name="Burkard T.R."/>
            <person name="Planyavsky M."/>
            <person name="Kaupe I."/>
            <person name="Breitwieser F.P."/>
            <person name="Buerckstuemmer T."/>
            <person name="Bennett K.L."/>
            <person name="Superti-Furga G."/>
            <person name="Colinge J."/>
        </authorList>
    </citation>
    <scope>IDENTIFICATION BY MASS SPECTROMETRY [LARGE SCALE ANALYSIS]</scope>
</reference>
<reference key="7">
    <citation type="journal article" date="2012" name="Proc. Natl. Acad. Sci. U.S.A.">
        <title>Structure of the human MTERF4-NSUN4 protein complex that regulates mitochondrial ribosome biogenesis.</title>
        <authorList>
            <person name="Spahr H."/>
            <person name="Habermann B."/>
            <person name="Gustafsson C.M."/>
            <person name="Larsson N.G."/>
            <person name="Hallberg B.M."/>
        </authorList>
    </citation>
    <scope>X-RAY CRYSTALLOGRAPHY (2.9 ANGSTROMS) OF 47-381 IN COMPLEX WITH NSUN4</scope>
    <scope>RNA-BINDING</scope>
    <scope>SUBCELLULAR LOCATION</scope>
    <scope>SUBUNIT</scope>
</reference>
<reference key="8">
    <citation type="journal article" date="2012" name="Structure">
        <title>Structure of the essential MTERF4:NSUN4 protein complex reveals how an MTERF protein collaborates to facilitate rRNA modification.</title>
        <authorList>
            <person name="Yakubovskaya E."/>
            <person name="Guja K.E."/>
            <person name="Mejia E."/>
            <person name="Castano S."/>
            <person name="Hambardjieva E."/>
            <person name="Choi W.S."/>
            <person name="Garcia-Diaz M."/>
        </authorList>
    </citation>
    <scope>X-RAY CRYSTALLOGRAPHY (2.0 ANGSTROMS) OF 122-330 IN COMPLEX WITH NSUN4</scope>
    <scope>MTERF REPEATS</scope>
    <scope>SUBUNIT</scope>
    <scope>SUBCELLULAR LOCATION</scope>
</reference>
<gene>
    <name type="primary">MTERF4</name>
    <name type="synonym">MTERFD2</name>
    <name type="ORF">HSPC096</name>
</gene>
<dbReference type="EMBL" id="AK291665">
    <property type="protein sequence ID" value="BAF84354.1"/>
    <property type="molecule type" value="mRNA"/>
</dbReference>
<dbReference type="EMBL" id="AC005237">
    <property type="status" value="NOT_ANNOTATED_CDS"/>
    <property type="molecule type" value="Genomic_DNA"/>
</dbReference>
<dbReference type="EMBL" id="BC053533">
    <property type="protein sequence ID" value="AAH53533.2"/>
    <property type="molecule type" value="mRNA"/>
</dbReference>
<dbReference type="EMBL" id="AF161359">
    <property type="protein sequence ID" value="AAF28919.1"/>
    <property type="status" value="ALT_INIT"/>
    <property type="molecule type" value="mRNA"/>
</dbReference>
<dbReference type="CCDS" id="CCDS2544.1"/>
<dbReference type="RefSeq" id="NP_872307.2">
    <property type="nucleotide sequence ID" value="NM_182501.3"/>
</dbReference>
<dbReference type="RefSeq" id="XP_016858876.1">
    <property type="nucleotide sequence ID" value="XM_017003387.1"/>
</dbReference>
<dbReference type="PDB" id="4FP9">
    <property type="method" value="X-ray"/>
    <property type="resolution" value="2.90 A"/>
    <property type="chains" value="B/E/G/H=47-381"/>
</dbReference>
<dbReference type="PDB" id="4FZV">
    <property type="method" value="X-ray"/>
    <property type="resolution" value="2.00 A"/>
    <property type="chains" value="B=122-330"/>
</dbReference>
<dbReference type="PDB" id="7O9K">
    <property type="method" value="EM"/>
    <property type="resolution" value="3.10 A"/>
    <property type="chains" value="A2=1-381"/>
</dbReference>
<dbReference type="PDB" id="7O9M">
    <property type="method" value="EM"/>
    <property type="resolution" value="2.50 A"/>
    <property type="chains" value="A2=1-381"/>
</dbReference>
<dbReference type="PDB" id="7ODR">
    <property type="method" value="EM"/>
    <property type="resolution" value="2.90 A"/>
    <property type="chains" value="y=1-381"/>
</dbReference>
<dbReference type="PDB" id="7ODS">
    <property type="method" value="EM"/>
    <property type="resolution" value="3.10 A"/>
    <property type="chains" value="y=1-381"/>
</dbReference>
<dbReference type="PDB" id="7ODT">
    <property type="method" value="EM"/>
    <property type="resolution" value="3.10 A"/>
    <property type="chains" value="y=1-381"/>
</dbReference>
<dbReference type="PDB" id="7OF0">
    <property type="method" value="EM"/>
    <property type="resolution" value="2.20 A"/>
    <property type="chains" value="G=1-381"/>
</dbReference>
<dbReference type="PDB" id="7OF3">
    <property type="method" value="EM"/>
    <property type="resolution" value="2.70 A"/>
    <property type="chains" value="G=1-381"/>
</dbReference>
<dbReference type="PDB" id="7OF5">
    <property type="method" value="EM"/>
    <property type="resolution" value="2.90 A"/>
    <property type="chains" value="G=1-381"/>
</dbReference>
<dbReference type="PDB" id="7OF7">
    <property type="method" value="EM"/>
    <property type="resolution" value="2.50 A"/>
    <property type="chains" value="G=1-381"/>
</dbReference>
<dbReference type="PDB" id="7OIC">
    <property type="method" value="EM"/>
    <property type="resolution" value="3.10 A"/>
    <property type="chains" value="y=1-381"/>
</dbReference>
<dbReference type="PDB" id="7PD3">
    <property type="method" value="EM"/>
    <property type="resolution" value="3.40 A"/>
    <property type="chains" value="y=1-381"/>
</dbReference>
<dbReference type="PDB" id="8PK0">
    <property type="method" value="EM"/>
    <property type="resolution" value="3.03 A"/>
    <property type="chains" value="y=1-381"/>
</dbReference>
<dbReference type="PDB" id="8QSJ">
    <property type="method" value="EM"/>
    <property type="resolution" value="3.00 A"/>
    <property type="chains" value="y=1-381"/>
</dbReference>
<dbReference type="PDBsum" id="4FP9"/>
<dbReference type="PDBsum" id="4FZV"/>
<dbReference type="PDBsum" id="7O9K"/>
<dbReference type="PDBsum" id="7O9M"/>
<dbReference type="PDBsum" id="7ODR"/>
<dbReference type="PDBsum" id="7ODS"/>
<dbReference type="PDBsum" id="7ODT"/>
<dbReference type="PDBsum" id="7OF0"/>
<dbReference type="PDBsum" id="7OF3"/>
<dbReference type="PDBsum" id="7OF5"/>
<dbReference type="PDBsum" id="7OF7"/>
<dbReference type="PDBsum" id="7OIC"/>
<dbReference type="PDBsum" id="7PD3"/>
<dbReference type="PDBsum" id="8PK0"/>
<dbReference type="PDBsum" id="8QSJ"/>
<dbReference type="EMDB" id="EMD-12763"/>
<dbReference type="EMDB" id="EMD-12764"/>
<dbReference type="EMDB" id="EMD-12845"/>
<dbReference type="EMDB" id="EMD-12846"/>
<dbReference type="EMDB" id="EMD-12847"/>
<dbReference type="EMDB" id="EMD-12865"/>
<dbReference type="EMDB" id="EMD-12868"/>
<dbReference type="EMDB" id="EMD-12870"/>
<dbReference type="EMDB" id="EMD-12872"/>
<dbReference type="EMDB" id="EMD-12925"/>
<dbReference type="EMDB" id="EMD-13329"/>
<dbReference type="EMDB" id="EMD-17719"/>
<dbReference type="SMR" id="Q7Z6M4"/>
<dbReference type="BioGRID" id="126263">
    <property type="interactions" value="28"/>
</dbReference>
<dbReference type="ComplexPortal" id="CPX-885">
    <property type="entry name" value="MTERF4-NSUN4 mitochondiral ribosomal assembly complex"/>
</dbReference>
<dbReference type="CORUM" id="Q7Z6M4"/>
<dbReference type="DIP" id="DIP-49918N"/>
<dbReference type="FunCoup" id="Q7Z6M4">
    <property type="interactions" value="2263"/>
</dbReference>
<dbReference type="IntAct" id="Q7Z6M4">
    <property type="interactions" value="18"/>
</dbReference>
<dbReference type="MINT" id="Q7Z6M4"/>
<dbReference type="STRING" id="9606.ENSP00000480378"/>
<dbReference type="iPTMnet" id="Q7Z6M4"/>
<dbReference type="PhosphoSitePlus" id="Q7Z6M4"/>
<dbReference type="SwissPalm" id="Q7Z6M4"/>
<dbReference type="BioMuta" id="MTERF4"/>
<dbReference type="DMDM" id="296439296"/>
<dbReference type="jPOST" id="Q7Z6M4"/>
<dbReference type="MassIVE" id="Q7Z6M4"/>
<dbReference type="PaxDb" id="9606-ENSP00000480378"/>
<dbReference type="PeptideAtlas" id="Q7Z6M4"/>
<dbReference type="ProteomicsDB" id="69450"/>
<dbReference type="Pumba" id="Q7Z6M4"/>
<dbReference type="Antibodypedia" id="34543">
    <property type="antibodies" value="59 antibodies from 18 providers"/>
</dbReference>
<dbReference type="Ensembl" id="ENST00000241527.10">
    <property type="protein sequence ID" value="ENSP00000241527.6"/>
    <property type="gene ID" value="ENSG00000122085.17"/>
</dbReference>
<dbReference type="Ensembl" id="ENST00000391980.7">
    <property type="protein sequence ID" value="ENSP00000375840.2"/>
    <property type="gene ID" value="ENSG00000122085.17"/>
</dbReference>
<dbReference type="Ensembl" id="ENST00000614476.4">
    <property type="protein sequence ID" value="ENSP00000480378.1"/>
    <property type="gene ID" value="ENSG00000122085.17"/>
</dbReference>
<dbReference type="GeneID" id="130916"/>
<dbReference type="KEGG" id="hsa:130916"/>
<dbReference type="MANE-Select" id="ENST00000391980.7">
    <property type="protein sequence ID" value="ENSP00000375840.2"/>
    <property type="RefSeq nucleotide sequence ID" value="NM_182501.4"/>
    <property type="RefSeq protein sequence ID" value="NP_872307.2"/>
</dbReference>
<dbReference type="UCSC" id="uc061uks.1">
    <property type="organism name" value="human"/>
</dbReference>
<dbReference type="AGR" id="HGNC:28785"/>
<dbReference type="CTD" id="130916"/>
<dbReference type="GeneCards" id="MTERF4"/>
<dbReference type="HGNC" id="HGNC:28785">
    <property type="gene designation" value="MTERF4"/>
</dbReference>
<dbReference type="HPA" id="ENSG00000122085">
    <property type="expression patterns" value="Low tissue specificity"/>
</dbReference>
<dbReference type="MIM" id="615393">
    <property type="type" value="gene"/>
</dbReference>
<dbReference type="neXtProt" id="NX_Q7Z6M4"/>
<dbReference type="OpenTargets" id="ENSG00000122085"/>
<dbReference type="PharmGKB" id="PA142671310"/>
<dbReference type="VEuPathDB" id="HostDB:ENSG00000122085"/>
<dbReference type="eggNOG" id="ENOG502RXUW">
    <property type="taxonomic scope" value="Eukaryota"/>
</dbReference>
<dbReference type="GeneTree" id="ENSGT00460000041648"/>
<dbReference type="HOGENOM" id="CLU_069384_1_0_1"/>
<dbReference type="InParanoid" id="Q7Z6M4"/>
<dbReference type="OMA" id="QAEMVKC"/>
<dbReference type="OrthoDB" id="9991972at2759"/>
<dbReference type="PAN-GO" id="Q7Z6M4">
    <property type="GO annotations" value="0 GO annotations based on evolutionary models"/>
</dbReference>
<dbReference type="PhylomeDB" id="Q7Z6M4"/>
<dbReference type="TreeFam" id="TF329452"/>
<dbReference type="PathwayCommons" id="Q7Z6M4"/>
<dbReference type="Reactome" id="R-HSA-6793080">
    <property type="pathway name" value="rRNA modification in the mitochondrion"/>
</dbReference>
<dbReference type="SignaLink" id="Q7Z6M4"/>
<dbReference type="BioGRID-ORCS" id="130916">
    <property type="hits" value="174 hits in 1158 CRISPR screens"/>
</dbReference>
<dbReference type="ChiTaRS" id="MTERF4">
    <property type="organism name" value="human"/>
</dbReference>
<dbReference type="EvolutionaryTrace" id="Q7Z6M4"/>
<dbReference type="GenomeRNAi" id="130916"/>
<dbReference type="Pharos" id="Q7Z6M4">
    <property type="development level" value="Tbio"/>
</dbReference>
<dbReference type="PRO" id="PR:Q7Z6M4"/>
<dbReference type="Proteomes" id="UP000005640">
    <property type="component" value="Chromosome 2"/>
</dbReference>
<dbReference type="RNAct" id="Q7Z6M4">
    <property type="molecule type" value="protein"/>
</dbReference>
<dbReference type="Bgee" id="ENSG00000122085">
    <property type="expression patterns" value="Expressed in sural nerve and 183 other cell types or tissues"/>
</dbReference>
<dbReference type="ExpressionAtlas" id="Q7Z6M4">
    <property type="expression patterns" value="baseline and differential"/>
</dbReference>
<dbReference type="GO" id="GO:0005829">
    <property type="term" value="C:cytosol"/>
    <property type="evidence" value="ECO:0000314"/>
    <property type="project" value="HPA"/>
</dbReference>
<dbReference type="GO" id="GO:0005762">
    <property type="term" value="C:mitochondrial large ribosomal subunit"/>
    <property type="evidence" value="ECO:0000314"/>
    <property type="project" value="MGI"/>
</dbReference>
<dbReference type="GO" id="GO:0005759">
    <property type="term" value="C:mitochondrial matrix"/>
    <property type="evidence" value="ECO:0000304"/>
    <property type="project" value="Reactome"/>
</dbReference>
<dbReference type="GO" id="GO:0005739">
    <property type="term" value="C:mitochondrion"/>
    <property type="evidence" value="ECO:0000314"/>
    <property type="project" value="HPA"/>
</dbReference>
<dbReference type="GO" id="GO:0003690">
    <property type="term" value="F:double-stranded DNA binding"/>
    <property type="evidence" value="ECO:0007669"/>
    <property type="project" value="InterPro"/>
</dbReference>
<dbReference type="GO" id="GO:0019843">
    <property type="term" value="F:rRNA binding"/>
    <property type="evidence" value="ECO:0000314"/>
    <property type="project" value="MGI"/>
</dbReference>
<dbReference type="GO" id="GO:0043010">
    <property type="term" value="P:camera-type eye development"/>
    <property type="evidence" value="ECO:0007669"/>
    <property type="project" value="Ensembl"/>
</dbReference>
<dbReference type="GO" id="GO:0007507">
    <property type="term" value="P:heart development"/>
    <property type="evidence" value="ECO:0007669"/>
    <property type="project" value="Ensembl"/>
</dbReference>
<dbReference type="GO" id="GO:0061668">
    <property type="term" value="P:mitochondrial ribosome assembly"/>
    <property type="evidence" value="ECO:0000318"/>
    <property type="project" value="GO_Central"/>
</dbReference>
<dbReference type="GO" id="GO:0006390">
    <property type="term" value="P:mitochondrial transcription"/>
    <property type="evidence" value="ECO:0000318"/>
    <property type="project" value="GO_Central"/>
</dbReference>
<dbReference type="GO" id="GO:0006626">
    <property type="term" value="P:protein targeting to mitochondrion"/>
    <property type="evidence" value="ECO:0007669"/>
    <property type="project" value="Ensembl"/>
</dbReference>
<dbReference type="GO" id="GO:0006355">
    <property type="term" value="P:regulation of DNA-templated transcription"/>
    <property type="evidence" value="ECO:0007669"/>
    <property type="project" value="InterPro"/>
</dbReference>
<dbReference type="GO" id="GO:0006364">
    <property type="term" value="P:rRNA processing"/>
    <property type="evidence" value="ECO:0007669"/>
    <property type="project" value="UniProtKB-KW"/>
</dbReference>
<dbReference type="FunFam" id="1.25.70.10:FF:000011">
    <property type="entry name" value="Mitochondrial transcription termination factor 4"/>
    <property type="match status" value="1"/>
</dbReference>
<dbReference type="Gene3D" id="1.25.70.10">
    <property type="entry name" value="Transcription termination factor 3, mitochondrial"/>
    <property type="match status" value="1"/>
</dbReference>
<dbReference type="InterPro" id="IPR003690">
    <property type="entry name" value="MTERF"/>
</dbReference>
<dbReference type="InterPro" id="IPR038538">
    <property type="entry name" value="MTERF_sf"/>
</dbReference>
<dbReference type="PANTHER" id="PTHR13068">
    <property type="entry name" value="CGI-12 PROTEIN-RELATED"/>
    <property type="match status" value="1"/>
</dbReference>
<dbReference type="PANTHER" id="PTHR13068:SF203">
    <property type="entry name" value="TRANSCRIPTION TERMINATION FACTOR 4, MITOCHONDRIAL"/>
    <property type="match status" value="1"/>
</dbReference>
<dbReference type="Pfam" id="PF02536">
    <property type="entry name" value="mTERF"/>
    <property type="match status" value="1"/>
</dbReference>
<dbReference type="SMART" id="SM00733">
    <property type="entry name" value="Mterf"/>
    <property type="match status" value="4"/>
</dbReference>
<proteinExistence type="evidence at protein level"/>
<protein>
    <recommendedName>
        <fullName>Transcription termination factor 4, mitochondrial</fullName>
    </recommendedName>
    <alternativeName>
        <fullName>Mitochondrial transcription termination factor 4</fullName>
    </alternativeName>
    <alternativeName>
        <fullName>mTERF domain-containing protein 2</fullName>
    </alternativeName>
    <component>
        <recommendedName>
            <fullName>mTERF domain-containing protein 2 processed</fullName>
        </recommendedName>
    </component>
</protein>
<comment type="function">
    <text evidence="2">Regulator of mitochondrial ribosome biogenesis and translation. Binds to mitochondrial ribosomal RNAs 16S, 12S and 7S and targets NSUN4 RNA methyltransferase to the mitochondrial large ribosomal subunit (39S).</text>
</comment>
<comment type="subunit">
    <text evidence="3 4">Heterodimer with NSUN4; this interaction may be required for NSUN4 recruitment to the mitochondrial large ribosomal subunit.</text>
</comment>
<comment type="interaction">
    <interactant intactId="EBI-948435">
        <id>Q7Z6M4</id>
    </interactant>
    <interactant intactId="EBI-11524452">
        <id>Q8N9N5-2</id>
        <label>BANP</label>
    </interactant>
    <organismsDiffer>false</organismsDiffer>
    <experiments>3</experiments>
</comment>
<comment type="interaction">
    <interactant intactId="EBI-948435">
        <id>Q7Z6M4</id>
    </interactant>
    <interactant intactId="EBI-7062247">
        <id>Q9UHD4</id>
        <label>CIDEB</label>
    </interactant>
    <organismsDiffer>false</organismsDiffer>
    <experiments>3</experiments>
</comment>
<comment type="interaction">
    <interactant intactId="EBI-948435">
        <id>Q7Z6M4</id>
    </interactant>
    <interactant intactId="EBI-12831978">
        <id>Q6ZPD8</id>
        <label>DGAT2L6</label>
    </interactant>
    <organismsDiffer>false</organismsDiffer>
    <experiments>3</experiments>
</comment>
<comment type="interaction">
    <interactant intactId="EBI-948435">
        <id>Q7Z6M4</id>
    </interactant>
    <interactant intactId="EBI-489887">
        <id>P50402</id>
        <label>EMD</label>
    </interactant>
    <organismsDiffer>false</organismsDiffer>
    <experiments>3</experiments>
</comment>
<comment type="interaction">
    <interactant intactId="EBI-948435">
        <id>Q7Z6M4</id>
    </interactant>
    <interactant intactId="EBI-16012886">
        <id>Q96CB9-1</id>
        <label>NSUN4</label>
    </interactant>
    <organismsDiffer>false</organismsDiffer>
    <experiments>7</experiments>
</comment>
<comment type="interaction">
    <interactant intactId="EBI-948435">
        <id>Q7Z6M4</id>
    </interactant>
    <interactant intactId="EBI-9057006">
        <id>Q9UJX0</id>
        <label>OSGIN1</label>
    </interactant>
    <organismsDiffer>false</organismsDiffer>
    <experiments>5</experiments>
</comment>
<comment type="interaction">
    <interactant intactId="EBI-948435">
        <id>Q7Z6M4</id>
    </interactant>
    <interactant intactId="EBI-1044859">
        <id>Q9UBN6</id>
        <label>TNFRSF10D</label>
    </interactant>
    <organismsDiffer>false</organismsDiffer>
    <experiments>3</experiments>
</comment>
<comment type="subcellular location">
    <subcellularLocation>
        <location evidence="2 3 4">Mitochondrion</location>
    </subcellularLocation>
</comment>
<comment type="domain">
    <text>The MTERF repeats form a half-donut shaped, right-handed superhelix, where the concave side displays a positively charged path for nucleic acid interaction.</text>
</comment>
<comment type="PTM">
    <text evidence="2">The mature mitochondrial protein exists in 2 forms differing at the level of their N-terminus, one is starting at residue 43 and the other at residue 48.</text>
</comment>
<comment type="similarity">
    <text evidence="5">Belongs to the mTERF family.</text>
</comment>
<comment type="sequence caution" evidence="5">
    <conflict type="erroneous initiation">
        <sequence resource="EMBL-CDS" id="AAF28919"/>
    </conflict>
    <text>Extended N-terminus.</text>
</comment>
<name>MTEF4_HUMAN</name>